<protein>
    <recommendedName>
        <fullName evidence="1">Thymidylate kinase</fullName>
        <ecNumber evidence="1">2.7.4.9</ecNumber>
    </recommendedName>
    <alternativeName>
        <fullName evidence="1">dTMP kinase</fullName>
    </alternativeName>
</protein>
<keyword id="KW-0067">ATP-binding</keyword>
<keyword id="KW-0418">Kinase</keyword>
<keyword id="KW-0545">Nucleotide biosynthesis</keyword>
<keyword id="KW-0547">Nucleotide-binding</keyword>
<keyword id="KW-1185">Reference proteome</keyword>
<keyword id="KW-0808">Transferase</keyword>
<proteinExistence type="inferred from homology"/>
<name>KTHY_DINSH</name>
<sequence>MTQPGRLISFEGIDGSGKSTQARRLAEHLRDTGRDPLLTREPGGSPGAEDIRRLLVEGDPDRWSPETELLLFTAARRDHLERLIQPALAEGRDVITDRFADSTRVYQGATRGDLRALVDQLHSLMIGREPDLTFVIDMPPELALTRGLARASGEDRFEEFGLPFQTALRAGFLDLARANPDRCVVIDGNRPEAEVAADVIAHLTVAA</sequence>
<reference key="1">
    <citation type="journal article" date="2010" name="ISME J.">
        <title>The complete genome sequence of the algal symbiont Dinoroseobacter shibae: a hitchhiker's guide to life in the sea.</title>
        <authorList>
            <person name="Wagner-Dobler I."/>
            <person name="Ballhausen B."/>
            <person name="Berger M."/>
            <person name="Brinkhoff T."/>
            <person name="Buchholz I."/>
            <person name="Bunk B."/>
            <person name="Cypionka H."/>
            <person name="Daniel R."/>
            <person name="Drepper T."/>
            <person name="Gerdts G."/>
            <person name="Hahnke S."/>
            <person name="Han C."/>
            <person name="Jahn D."/>
            <person name="Kalhoefer D."/>
            <person name="Kiss H."/>
            <person name="Klenk H.P."/>
            <person name="Kyrpides N."/>
            <person name="Liebl W."/>
            <person name="Liesegang H."/>
            <person name="Meincke L."/>
            <person name="Pati A."/>
            <person name="Petersen J."/>
            <person name="Piekarski T."/>
            <person name="Pommerenke C."/>
            <person name="Pradella S."/>
            <person name="Pukall R."/>
            <person name="Rabus R."/>
            <person name="Stackebrandt E."/>
            <person name="Thole S."/>
            <person name="Thompson L."/>
            <person name="Tielen P."/>
            <person name="Tomasch J."/>
            <person name="von Jan M."/>
            <person name="Wanphrut N."/>
            <person name="Wichels A."/>
            <person name="Zech H."/>
            <person name="Simon M."/>
        </authorList>
    </citation>
    <scope>NUCLEOTIDE SEQUENCE [LARGE SCALE GENOMIC DNA]</scope>
    <source>
        <strain>DSM 16493 / NCIMB 14021 / DFL 12</strain>
    </source>
</reference>
<dbReference type="EC" id="2.7.4.9" evidence="1"/>
<dbReference type="EMBL" id="CP000830">
    <property type="protein sequence ID" value="ABV92667.1"/>
    <property type="molecule type" value="Genomic_DNA"/>
</dbReference>
<dbReference type="RefSeq" id="WP_012177599.1">
    <property type="nucleotide sequence ID" value="NC_009952.1"/>
</dbReference>
<dbReference type="SMR" id="A8LRW0"/>
<dbReference type="STRING" id="398580.Dshi_0922"/>
<dbReference type="KEGG" id="dsh:Dshi_0922"/>
<dbReference type="eggNOG" id="COG0125">
    <property type="taxonomic scope" value="Bacteria"/>
</dbReference>
<dbReference type="HOGENOM" id="CLU_049131_0_0_5"/>
<dbReference type="OrthoDB" id="9774907at2"/>
<dbReference type="Proteomes" id="UP000006833">
    <property type="component" value="Chromosome"/>
</dbReference>
<dbReference type="GO" id="GO:0005829">
    <property type="term" value="C:cytosol"/>
    <property type="evidence" value="ECO:0007669"/>
    <property type="project" value="TreeGrafter"/>
</dbReference>
<dbReference type="GO" id="GO:0005524">
    <property type="term" value="F:ATP binding"/>
    <property type="evidence" value="ECO:0007669"/>
    <property type="project" value="UniProtKB-UniRule"/>
</dbReference>
<dbReference type="GO" id="GO:0004798">
    <property type="term" value="F:dTMP kinase activity"/>
    <property type="evidence" value="ECO:0007669"/>
    <property type="project" value="UniProtKB-UniRule"/>
</dbReference>
<dbReference type="GO" id="GO:0006233">
    <property type="term" value="P:dTDP biosynthetic process"/>
    <property type="evidence" value="ECO:0007669"/>
    <property type="project" value="InterPro"/>
</dbReference>
<dbReference type="GO" id="GO:0006235">
    <property type="term" value="P:dTTP biosynthetic process"/>
    <property type="evidence" value="ECO:0007669"/>
    <property type="project" value="UniProtKB-UniRule"/>
</dbReference>
<dbReference type="GO" id="GO:0006227">
    <property type="term" value="P:dUDP biosynthetic process"/>
    <property type="evidence" value="ECO:0007669"/>
    <property type="project" value="TreeGrafter"/>
</dbReference>
<dbReference type="CDD" id="cd01672">
    <property type="entry name" value="TMPK"/>
    <property type="match status" value="1"/>
</dbReference>
<dbReference type="FunFam" id="3.40.50.300:FF:000225">
    <property type="entry name" value="Thymidylate kinase"/>
    <property type="match status" value="1"/>
</dbReference>
<dbReference type="Gene3D" id="3.40.50.300">
    <property type="entry name" value="P-loop containing nucleotide triphosphate hydrolases"/>
    <property type="match status" value="1"/>
</dbReference>
<dbReference type="HAMAP" id="MF_00165">
    <property type="entry name" value="Thymidylate_kinase"/>
    <property type="match status" value="1"/>
</dbReference>
<dbReference type="InterPro" id="IPR027417">
    <property type="entry name" value="P-loop_NTPase"/>
</dbReference>
<dbReference type="InterPro" id="IPR039430">
    <property type="entry name" value="Thymidylate_kin-like_dom"/>
</dbReference>
<dbReference type="InterPro" id="IPR018095">
    <property type="entry name" value="Thymidylate_kin_CS"/>
</dbReference>
<dbReference type="InterPro" id="IPR018094">
    <property type="entry name" value="Thymidylate_kinase"/>
</dbReference>
<dbReference type="NCBIfam" id="TIGR00041">
    <property type="entry name" value="DTMP_kinase"/>
    <property type="match status" value="1"/>
</dbReference>
<dbReference type="PANTHER" id="PTHR10344">
    <property type="entry name" value="THYMIDYLATE KINASE"/>
    <property type="match status" value="1"/>
</dbReference>
<dbReference type="PANTHER" id="PTHR10344:SF4">
    <property type="entry name" value="UMP-CMP KINASE 2, MITOCHONDRIAL"/>
    <property type="match status" value="1"/>
</dbReference>
<dbReference type="Pfam" id="PF02223">
    <property type="entry name" value="Thymidylate_kin"/>
    <property type="match status" value="1"/>
</dbReference>
<dbReference type="SUPFAM" id="SSF52540">
    <property type="entry name" value="P-loop containing nucleoside triphosphate hydrolases"/>
    <property type="match status" value="1"/>
</dbReference>
<dbReference type="PROSITE" id="PS01331">
    <property type="entry name" value="THYMIDYLATE_KINASE"/>
    <property type="match status" value="1"/>
</dbReference>
<gene>
    <name evidence="1" type="primary">tmk</name>
    <name type="ordered locus">Dshi_0922</name>
</gene>
<feature type="chain" id="PRO_1000123569" description="Thymidylate kinase">
    <location>
        <begin position="1"/>
        <end position="207"/>
    </location>
</feature>
<feature type="region of interest" description="Disordered" evidence="2">
    <location>
        <begin position="11"/>
        <end position="49"/>
    </location>
</feature>
<feature type="compositionally biased region" description="Basic and acidic residues" evidence="2">
    <location>
        <begin position="24"/>
        <end position="38"/>
    </location>
</feature>
<feature type="binding site" evidence="1">
    <location>
        <begin position="12"/>
        <end position="19"/>
    </location>
    <ligand>
        <name>ATP</name>
        <dbReference type="ChEBI" id="CHEBI:30616"/>
    </ligand>
</feature>
<organism>
    <name type="scientific">Dinoroseobacter shibae (strain DSM 16493 / NCIMB 14021 / DFL 12)</name>
    <dbReference type="NCBI Taxonomy" id="398580"/>
    <lineage>
        <taxon>Bacteria</taxon>
        <taxon>Pseudomonadati</taxon>
        <taxon>Pseudomonadota</taxon>
        <taxon>Alphaproteobacteria</taxon>
        <taxon>Rhodobacterales</taxon>
        <taxon>Roseobacteraceae</taxon>
        <taxon>Dinoroseobacter</taxon>
    </lineage>
</organism>
<comment type="function">
    <text evidence="1">Phosphorylation of dTMP to form dTDP in both de novo and salvage pathways of dTTP synthesis.</text>
</comment>
<comment type="catalytic activity">
    <reaction evidence="1">
        <text>dTMP + ATP = dTDP + ADP</text>
        <dbReference type="Rhea" id="RHEA:13517"/>
        <dbReference type="ChEBI" id="CHEBI:30616"/>
        <dbReference type="ChEBI" id="CHEBI:58369"/>
        <dbReference type="ChEBI" id="CHEBI:63528"/>
        <dbReference type="ChEBI" id="CHEBI:456216"/>
        <dbReference type="EC" id="2.7.4.9"/>
    </reaction>
</comment>
<comment type="similarity">
    <text evidence="1">Belongs to the thymidylate kinase family.</text>
</comment>
<evidence type="ECO:0000255" key="1">
    <source>
        <dbReference type="HAMAP-Rule" id="MF_00165"/>
    </source>
</evidence>
<evidence type="ECO:0000256" key="2">
    <source>
        <dbReference type="SAM" id="MobiDB-lite"/>
    </source>
</evidence>
<accession>A8LRW0</accession>